<sequence length="280" mass="29733">MNDLMRDLAPISAKAWAEIETEARGTLTVTLAARKVVDFKGPLGWDASSVSLGRTEALAEEPKAAGSAAVVTVRKRAVQPLIELCVPFTLKRAELEAIARGASDADLDPVIEAARAIAIAEDRAVFHGFAAGGITGIGEASAEHALDLPADLADFPGVLVRALAVLRDRGVDGPYALVLGRTVYQQLMETTTPGGYPVLQHVRRLFEGPLIWAPGVDGAMLISQRGGDFELTVGRDFSIGYHDHDAQSVHLYLQESMTFRCLGPEAAVPLRGLSQAATKA</sequence>
<comment type="function">
    <text evidence="2 3">Shell component of a type 1 encapsulin nanocompartment. Assembles into proteinaceous icosahedral shells 24 nm in diameter in the presence and absence of its ferritin cargo protein. The center of cargo-loaded nanocompartments is loaded with iron. The empty encapsulin nanocompartment sequesters about 2200 Fe ions while the cargo-loaded nanocompartment can maximally sequester about 4150 Fe ions. Does not have any detectable ferroxidase activity.</text>
</comment>
<comment type="subunit">
    <text evidence="1 6">This encapsulin nanocompartment is formed by 60 subunits; monomers form pentamers which assemble to form shells. There are 12 pores where the pentamers meet as well as 3-fold axis channels and dimer channels; none are larger than 3-4 Angstroms in diameter. The N-terminus of the protein is inside the shell, the C-terminus is outside.</text>
</comment>
<comment type="subcellular location">
    <subcellularLocation>
        <location evidence="2">Encapsulin nanocompartment</location>
    </subcellularLocation>
</comment>
<comment type="similarity">
    <text evidence="5">Belongs to the encapsulin family. Family 1 subfamily.</text>
</comment>
<protein>
    <recommendedName>
        <fullName evidence="4">Type 1 encapsulin shell protein</fullName>
    </recommendedName>
</protein>
<feature type="chain" id="PRO_0000455318" description="Type 1 encapsulin shell protein">
    <location>
        <begin position="1"/>
        <end position="280"/>
    </location>
</feature>
<reference key="1">
    <citation type="journal article" date="2011" name="Stand. Genomic Sci.">
        <title>Complete genome sequence of Rhodospirillum rubrum type strain (S1).</title>
        <authorList>
            <person name="Munk A.C."/>
            <person name="Copeland A."/>
            <person name="Lucas S."/>
            <person name="Lapidus A."/>
            <person name="Del Rio T.G."/>
            <person name="Barry K."/>
            <person name="Detter J.C."/>
            <person name="Hammon N."/>
            <person name="Israni S."/>
            <person name="Pitluck S."/>
            <person name="Brettin T."/>
            <person name="Bruce D."/>
            <person name="Han C."/>
            <person name="Tapia R."/>
            <person name="Gilna P."/>
            <person name="Schmutz J."/>
            <person name="Larimer F."/>
            <person name="Land M."/>
            <person name="Kyrpides N.C."/>
            <person name="Mavromatis K."/>
            <person name="Richardson P."/>
            <person name="Rohde M."/>
            <person name="Goeker M."/>
            <person name="Klenk H.P."/>
            <person name="Zhang Y."/>
            <person name="Roberts G.P."/>
            <person name="Reslewic S."/>
            <person name="Schwartz D.C."/>
        </authorList>
    </citation>
    <scope>NUCLEOTIDE SEQUENCE [LARGE SCALE GENOMIC DNA]</scope>
    <source>
        <strain>ATCC 11170 / ATH 1.1.1 / DSM 467 / LMG 4362 / NCIMB 8255 / S1</strain>
    </source>
</reference>
<reference key="2">
    <citation type="journal article" date="2016" name="Elife">
        <title>Structural characterization of encapsulated ferritin provides insight into iron storage in bacterial nanocompartments.</title>
        <authorList>
            <person name="He D."/>
            <person name="Hughes S."/>
            <person name="Vanden-Hehir S."/>
            <person name="Georgiev A."/>
            <person name="Altenbach K."/>
            <person name="Tarrant E."/>
            <person name="Mackay C.L."/>
            <person name="Waldron K.J."/>
            <person name="Clarke D.J."/>
            <person name="Marles-Wright J."/>
        </authorList>
    </citation>
    <scope>FUNCTION</scope>
    <scope>SUBUNIT</scope>
    <scope>SUBCELLULAR LOCATION</scope>
    <source>
        <strain>ATCC 11170 / ATH 1.1.1 / DSM 467 / LMG 4362 / NCIMB 8255 / S1</strain>
    </source>
</reference>
<reference key="3">
    <citation type="journal article" date="2020" name="J. Biol. Chem.">
        <title>Dissecting the structural and functional roles of a putative metal entry site in encapsulated ferritins.</title>
        <authorList>
            <person name="Piergentili C."/>
            <person name="Ross J."/>
            <person name="He D."/>
            <person name="Gallagher K.J."/>
            <person name="Stanley W.A."/>
            <person name="Adam L."/>
            <person name="Mackay C.L."/>
            <person name="Basle A."/>
            <person name="Waldron K.J."/>
            <person name="Clarke D.J."/>
            <person name="Marles-Wright J."/>
        </authorList>
    </citation>
    <scope>FUNCTION</scope>
    <source>
        <strain>ATCC 11170 / ATH 1.1.1 / DSM 467 / LMG 4362 / NCIMB 8255 / S1</strain>
    </source>
</reference>
<reference key="4">
    <citation type="journal article" date="2021" name="Nat. Commun.">
        <title>Large-scale computational discovery and analysis of virus-derived microbial nanocompartments.</title>
        <authorList>
            <person name="Andreas M.P."/>
            <person name="Giessen T.W."/>
        </authorList>
    </citation>
    <scope>CLASSIFICATION</scope>
</reference>
<accession>Q2RVS0</accession>
<dbReference type="EMBL" id="CP000230">
    <property type="protein sequence ID" value="ABC21775.1"/>
    <property type="molecule type" value="Genomic_DNA"/>
</dbReference>
<dbReference type="RefSeq" id="WP_011388729.1">
    <property type="nucleotide sequence ID" value="NC_007643.1"/>
</dbReference>
<dbReference type="RefSeq" id="YP_426062.1">
    <property type="nucleotide sequence ID" value="NC_007643.1"/>
</dbReference>
<dbReference type="SMR" id="Q2RVS0"/>
<dbReference type="STRING" id="269796.Rru_A0974"/>
<dbReference type="MEROPS" id="U56.001"/>
<dbReference type="TCDB" id="1.S.6.1.3">
    <property type="family name" value="the bacterial/archaeal nanocompartment encapsulin shell protein1 (banc-sp1) family"/>
</dbReference>
<dbReference type="EnsemblBacteria" id="ABC21775">
    <property type="protein sequence ID" value="ABC21775"/>
    <property type="gene ID" value="Rru_A0974"/>
</dbReference>
<dbReference type="KEGG" id="rru:Rru_A0974"/>
<dbReference type="PATRIC" id="fig|269796.9.peg.1029"/>
<dbReference type="eggNOG" id="COG1659">
    <property type="taxonomic scope" value="Bacteria"/>
</dbReference>
<dbReference type="HOGENOM" id="CLU_089875_1_0_5"/>
<dbReference type="Proteomes" id="UP000001929">
    <property type="component" value="Chromosome"/>
</dbReference>
<dbReference type="GO" id="GO:0140737">
    <property type="term" value="C:encapsulin nanocompartment"/>
    <property type="evidence" value="ECO:0000314"/>
    <property type="project" value="UniProtKB"/>
</dbReference>
<dbReference type="GO" id="GO:0006879">
    <property type="term" value="P:intracellular iron ion homeostasis"/>
    <property type="evidence" value="ECO:0007669"/>
    <property type="project" value="UniProtKB-KW"/>
</dbReference>
<dbReference type="GO" id="GO:0006826">
    <property type="term" value="P:iron ion transport"/>
    <property type="evidence" value="ECO:0007669"/>
    <property type="project" value="UniProtKB-KW"/>
</dbReference>
<dbReference type="Gene3D" id="3.30.2400.30">
    <property type="match status" value="1"/>
</dbReference>
<dbReference type="Gene3D" id="3.30.2320.10">
    <property type="entry name" value="hypothetical protein PF0899 domain"/>
    <property type="match status" value="1"/>
</dbReference>
<dbReference type="InterPro" id="IPR007544">
    <property type="entry name" value="ENCAP"/>
</dbReference>
<dbReference type="InterPro" id="IPR051429">
    <property type="entry name" value="Encapsulin_nc"/>
</dbReference>
<dbReference type="NCBIfam" id="NF041155">
    <property type="entry name" value="encap_f1"/>
    <property type="match status" value="1"/>
</dbReference>
<dbReference type="PANTHER" id="PTHR37165">
    <property type="entry name" value="PEPTIDASE U56 FAMILY"/>
    <property type="match status" value="1"/>
</dbReference>
<dbReference type="PANTHER" id="PTHR37165:SF1">
    <property type="entry name" value="TYPE 1 ENCAPSULIN SHELL PROTEIN"/>
    <property type="match status" value="1"/>
</dbReference>
<dbReference type="Pfam" id="PF04454">
    <property type="entry name" value="Linocin_M18"/>
    <property type="match status" value="1"/>
</dbReference>
<dbReference type="PIRSF" id="PIRSF019254">
    <property type="entry name" value="CFP29"/>
    <property type="match status" value="1"/>
</dbReference>
<evidence type="ECO:0000250" key="1">
    <source>
        <dbReference type="UniProtKB" id="Q9WZP2"/>
    </source>
</evidence>
<evidence type="ECO:0000269" key="2">
    <source>
    </source>
</evidence>
<evidence type="ECO:0000269" key="3">
    <source>
    </source>
</evidence>
<evidence type="ECO:0000303" key="4">
    <source>
    </source>
</evidence>
<evidence type="ECO:0000305" key="5"/>
<evidence type="ECO:0000305" key="6">
    <source>
    </source>
</evidence>
<proteinExistence type="evidence at protein level"/>
<keyword id="KW-1284">Encapsulin nanocompartment</keyword>
<keyword id="KW-0406">Ion transport</keyword>
<keyword id="KW-0408">Iron</keyword>
<keyword id="KW-0409">Iron storage</keyword>
<keyword id="KW-0410">Iron transport</keyword>
<keyword id="KW-1185">Reference proteome</keyword>
<keyword id="KW-0813">Transport</keyword>
<name>ENCAP_RHORT</name>
<organism>
    <name type="scientific">Rhodospirillum rubrum (strain ATCC 11170 / ATH 1.1.1 / DSM 467 / LMG 4362 / NCIMB 8255 / S1)</name>
    <dbReference type="NCBI Taxonomy" id="269796"/>
    <lineage>
        <taxon>Bacteria</taxon>
        <taxon>Pseudomonadati</taxon>
        <taxon>Pseudomonadota</taxon>
        <taxon>Alphaproteobacteria</taxon>
        <taxon>Rhodospirillales</taxon>
        <taxon>Rhodospirillaceae</taxon>
        <taxon>Rhodospirillum</taxon>
    </lineage>
</organism>
<gene>
    <name evidence="5" type="primary">enc</name>
    <name type="ordered locus">Rru_A0974</name>
</gene>